<reference key="1">
    <citation type="submission" date="2008-10" db="EMBL/GenBank/DDBJ databases">
        <title>Genome sequence of Bacillus anthracis str. CDC 684.</title>
        <authorList>
            <person name="Dodson R.J."/>
            <person name="Munk A.C."/>
            <person name="Brettin T."/>
            <person name="Bruce D."/>
            <person name="Detter C."/>
            <person name="Tapia R."/>
            <person name="Han C."/>
            <person name="Sutton G."/>
            <person name="Sims D."/>
        </authorList>
    </citation>
    <scope>NUCLEOTIDE SEQUENCE [LARGE SCALE GENOMIC DNA]</scope>
    <source>
        <strain>CDC 684 / NRRL 3495</strain>
    </source>
</reference>
<dbReference type="EMBL" id="CP001215">
    <property type="protein sequence ID" value="ACP17465.1"/>
    <property type="molecule type" value="Genomic_DNA"/>
</dbReference>
<dbReference type="RefSeq" id="WP_000831901.1">
    <property type="nucleotide sequence ID" value="NC_012581.1"/>
</dbReference>
<dbReference type="SMR" id="C3LGU5"/>
<dbReference type="GeneID" id="93005634"/>
<dbReference type="KEGG" id="bah:BAMEG_5789"/>
<dbReference type="HOGENOM" id="CLU_129938_2_0_9"/>
<dbReference type="GO" id="GO:1990904">
    <property type="term" value="C:ribonucleoprotein complex"/>
    <property type="evidence" value="ECO:0007669"/>
    <property type="project" value="UniProtKB-KW"/>
</dbReference>
<dbReference type="GO" id="GO:0005840">
    <property type="term" value="C:ribosome"/>
    <property type="evidence" value="ECO:0007669"/>
    <property type="project" value="UniProtKB-KW"/>
</dbReference>
<dbReference type="GO" id="GO:0003735">
    <property type="term" value="F:structural constituent of ribosome"/>
    <property type="evidence" value="ECO:0007669"/>
    <property type="project" value="InterPro"/>
</dbReference>
<dbReference type="GO" id="GO:0006412">
    <property type="term" value="P:translation"/>
    <property type="evidence" value="ECO:0007669"/>
    <property type="project" value="UniProtKB-UniRule"/>
</dbReference>
<dbReference type="FunFam" id="1.10.287.3980:FF:000001">
    <property type="entry name" value="Mitochondrial ribosomal protein L34"/>
    <property type="match status" value="1"/>
</dbReference>
<dbReference type="Gene3D" id="1.10.287.3980">
    <property type="match status" value="1"/>
</dbReference>
<dbReference type="HAMAP" id="MF_00391">
    <property type="entry name" value="Ribosomal_bL34"/>
    <property type="match status" value="1"/>
</dbReference>
<dbReference type="InterPro" id="IPR000271">
    <property type="entry name" value="Ribosomal_bL34"/>
</dbReference>
<dbReference type="InterPro" id="IPR020939">
    <property type="entry name" value="Ribosomal_bL34_CS"/>
</dbReference>
<dbReference type="NCBIfam" id="TIGR01030">
    <property type="entry name" value="rpmH_bact"/>
    <property type="match status" value="1"/>
</dbReference>
<dbReference type="PANTHER" id="PTHR14503:SF4">
    <property type="entry name" value="LARGE RIBOSOMAL SUBUNIT PROTEIN BL34M"/>
    <property type="match status" value="1"/>
</dbReference>
<dbReference type="PANTHER" id="PTHR14503">
    <property type="entry name" value="MITOCHONDRIAL RIBOSOMAL PROTEIN 34 FAMILY MEMBER"/>
    <property type="match status" value="1"/>
</dbReference>
<dbReference type="Pfam" id="PF00468">
    <property type="entry name" value="Ribosomal_L34"/>
    <property type="match status" value="1"/>
</dbReference>
<dbReference type="PROSITE" id="PS00784">
    <property type="entry name" value="RIBOSOMAL_L34"/>
    <property type="match status" value="1"/>
</dbReference>
<comment type="similarity">
    <text evidence="1">Belongs to the bacterial ribosomal protein bL34 family.</text>
</comment>
<protein>
    <recommendedName>
        <fullName evidence="1">Large ribosomal subunit protein bL34</fullName>
    </recommendedName>
    <alternativeName>
        <fullName evidence="3">50S ribosomal protein L34</fullName>
    </alternativeName>
</protein>
<evidence type="ECO:0000255" key="1">
    <source>
        <dbReference type="HAMAP-Rule" id="MF_00391"/>
    </source>
</evidence>
<evidence type="ECO:0000256" key="2">
    <source>
        <dbReference type="SAM" id="MobiDB-lite"/>
    </source>
</evidence>
<evidence type="ECO:0000305" key="3"/>
<keyword id="KW-0687">Ribonucleoprotein</keyword>
<keyword id="KW-0689">Ribosomal protein</keyword>
<gene>
    <name evidence="1" type="primary">rpmH</name>
    <name type="ordered locus">BAMEG_5789</name>
</gene>
<organism>
    <name type="scientific">Bacillus anthracis (strain CDC 684 / NRRL 3495)</name>
    <dbReference type="NCBI Taxonomy" id="568206"/>
    <lineage>
        <taxon>Bacteria</taxon>
        <taxon>Bacillati</taxon>
        <taxon>Bacillota</taxon>
        <taxon>Bacilli</taxon>
        <taxon>Bacillales</taxon>
        <taxon>Bacillaceae</taxon>
        <taxon>Bacillus</taxon>
        <taxon>Bacillus cereus group</taxon>
    </lineage>
</organism>
<name>RL34_BACAC</name>
<sequence>MKRTYQPNKRKRSKVHGFRSRMSTANGRKVLAARRRKGRKVLSA</sequence>
<feature type="chain" id="PRO_1000134423" description="Large ribosomal subunit protein bL34">
    <location>
        <begin position="1"/>
        <end position="44"/>
    </location>
</feature>
<feature type="region of interest" description="Disordered" evidence="2">
    <location>
        <begin position="1"/>
        <end position="44"/>
    </location>
</feature>
<feature type="compositionally biased region" description="Basic residues" evidence="2">
    <location>
        <begin position="1"/>
        <end position="19"/>
    </location>
</feature>
<feature type="compositionally biased region" description="Basic residues" evidence="2">
    <location>
        <begin position="31"/>
        <end position="44"/>
    </location>
</feature>
<accession>C3LGU5</accession>
<proteinExistence type="inferred from homology"/>